<organism>
    <name type="scientific">Pongo abelii</name>
    <name type="common">Sumatran orangutan</name>
    <name type="synonym">Pongo pygmaeus abelii</name>
    <dbReference type="NCBI Taxonomy" id="9601"/>
    <lineage>
        <taxon>Eukaryota</taxon>
        <taxon>Metazoa</taxon>
        <taxon>Chordata</taxon>
        <taxon>Craniata</taxon>
        <taxon>Vertebrata</taxon>
        <taxon>Euteleostomi</taxon>
        <taxon>Mammalia</taxon>
        <taxon>Eutheria</taxon>
        <taxon>Euarchontoglires</taxon>
        <taxon>Primates</taxon>
        <taxon>Haplorrhini</taxon>
        <taxon>Catarrhini</taxon>
        <taxon>Hominidae</taxon>
        <taxon>Pongo</taxon>
    </lineage>
</organism>
<feature type="initiator methionine" description="Removed" evidence="1">
    <location>
        <position position="1"/>
    </location>
</feature>
<feature type="chain" id="PRO_0000260303" description="Leucine-zipper-like transcriptional regulator 1">
    <location>
        <begin position="2"/>
        <end position="840"/>
    </location>
</feature>
<feature type="repeat" description="Kelch 1" evidence="2">
    <location>
        <begin position="79"/>
        <end position="128"/>
    </location>
</feature>
<feature type="repeat" description="Kelch 2" evidence="2">
    <location>
        <begin position="130"/>
        <end position="185"/>
    </location>
</feature>
<feature type="repeat" description="Kelch 3" evidence="2">
    <location>
        <begin position="187"/>
        <end position="238"/>
    </location>
</feature>
<feature type="repeat" description="Kelch 4" evidence="2">
    <location>
        <begin position="239"/>
        <end position="285"/>
    </location>
</feature>
<feature type="repeat" description="Kelch 5" evidence="2">
    <location>
        <begin position="295"/>
        <end position="341"/>
    </location>
</feature>
<feature type="repeat" description="Kelch 6" evidence="2">
    <location>
        <begin position="399"/>
        <end position="450"/>
    </location>
</feature>
<feature type="domain" description="BTB 1" evidence="3">
    <location>
        <begin position="443"/>
        <end position="537"/>
    </location>
</feature>
<feature type="domain" description="BTB 2" evidence="3">
    <location>
        <begin position="667"/>
        <end position="736"/>
    </location>
</feature>
<feature type="region of interest" description="Disordered" evidence="4">
    <location>
        <begin position="329"/>
        <end position="353"/>
    </location>
</feature>
<feature type="modified residue" description="N-acetylalanine" evidence="1">
    <location>
        <position position="2"/>
    </location>
</feature>
<accession>Q5R4Q7</accession>
<keyword id="KW-0007">Acetylation</keyword>
<keyword id="KW-0967">Endosome</keyword>
<keyword id="KW-0333">Golgi apparatus</keyword>
<keyword id="KW-0880">Kelch repeat</keyword>
<keyword id="KW-0472">Membrane</keyword>
<keyword id="KW-0597">Phosphoprotein</keyword>
<keyword id="KW-1185">Reference proteome</keyword>
<keyword id="KW-0677">Repeat</keyword>
<keyword id="KW-0833">Ubl conjugation pathway</keyword>
<protein>
    <recommendedName>
        <fullName>Leucine-zipper-like transcriptional regulator 1</fullName>
        <shortName>LZTR-1</shortName>
    </recommendedName>
</protein>
<comment type="function">
    <text evidence="1">Substrate-specific adapter of a BCR (BTB-CUL3-RBX1) E3 ubiquitin-protein ligase complex that mediates ubiquitination of Ras (K-Ras/KRAS, N-Ras/NRAS and H-Ras/HRAS). Is a negative regulator of RAS-MAPK signaling that acts by controlling Ras levels and decreasing Ras association with membranes.</text>
</comment>
<comment type="pathway">
    <text evidence="1">Protein modification; protein ubiquitination.</text>
</comment>
<comment type="subunit">
    <text evidence="1">Homodimer. Component of the BCR(LZTR1) E3 ubiquitin ligase complex, at least composed of CUL3, LZTR1 and RBX1. Interacts with Ras (K-Ras/KRAS, N-Ras/NRAS and H-Ras/HRAS). Interacts with RAF1. Interacts with SHOC2. Interacts with PPP1CB.</text>
</comment>
<comment type="subcellular location">
    <subcellularLocation>
        <location evidence="1">Endomembrane system</location>
    </subcellularLocation>
    <subcellularLocation>
        <location evidence="1">Recycling endosome</location>
    </subcellularLocation>
    <subcellularLocation>
        <location evidence="1">Golgi apparatus</location>
    </subcellularLocation>
</comment>
<comment type="PTM">
    <text evidence="1">Phosphorylated on tyrosine upon induction of apoptosis, leading to its degradation by the proteasome.</text>
</comment>
<comment type="similarity">
    <text evidence="5">Belongs to the LZTR1 family.</text>
</comment>
<evidence type="ECO:0000250" key="1">
    <source>
        <dbReference type="UniProtKB" id="Q8N653"/>
    </source>
</evidence>
<evidence type="ECO:0000255" key="2"/>
<evidence type="ECO:0000255" key="3">
    <source>
        <dbReference type="PROSITE-ProRule" id="PRU00037"/>
    </source>
</evidence>
<evidence type="ECO:0000256" key="4">
    <source>
        <dbReference type="SAM" id="MobiDB-lite"/>
    </source>
</evidence>
<evidence type="ECO:0000305" key="5"/>
<sequence length="840" mass="94526">MAGPGSTGGQIGAGALAGGARSKVAPSVDFDHSCSDSVEYLTLNFGPFETVHRWRRLPPCDEFVGARRSKHTVVAYKDAIYVFGGDNGKTMLNDLLRFDVKDCSWCRAFTTGTPPAPRYHHSAVVYGSSMFVFGGYAGDIYSNSNLKNKNDLFEYKFATGQWTEWKIEGRLPVARSAHGATVYSDKLWIFAGYDGNARLNDMWTIGLQDRELTCWEEVAQSGEIPPSCCNFPVAVRRDKMFVFSGQSGAKITNNLFQFEFKDKTWTRIPTEHLLRGSPPPPQRRYGHTMVAFDRHLYVFGGAADNTLPNELHCYDVDFQTWEVVQPSSDSEVGGAEVPERACASEEVPTLTSEERGGFKKSRDVFGLDFGTTSAKQPAQPASELPSGRLFHAAAVISDAMYIFGGTVDNNIRSGEMYRFQFSCYPKCTLHEDYGRLWESRQFCDVEFVLGEKEECVQGHVAIVTARSRWLRRKITQARERLAQKLEQEAAPVPREAPGVAAGGARPPLLHVAIREAEARPFEVLMQFLYTDKIKYPRKGHVEDVLLIMDVYKLALSFQLCRLEQLCRQYIEASVDLQNVLVVCESAARLQLSQLKEHCLNFVVKESHFNQVIMMKEFERLSSPLIVEIVRRKQQPPPRTPSDQPVDIGTSLIQDMKAYLEGAGAEFCDITLLLDGHPRPAHKAILAARSSYFEAMFRSFMPEDGQVNISIGEMVPSRQAFESMLRYIYYGEVNMPPEDSLYLFAAPYYYGFYNNRLQAYCKQNLEMNATVQNVLQILEAADKTQALDMKRHCLHIIVHQFTKVSKLPTLRSLSQQLLLDIIDSLASHISDKQCAELGADI</sequence>
<dbReference type="EMBL" id="CR861188">
    <property type="protein sequence ID" value="CAH93259.1"/>
    <property type="molecule type" value="mRNA"/>
</dbReference>
<dbReference type="RefSeq" id="NP_001126917.1">
    <property type="nucleotide sequence ID" value="NM_001133445.1"/>
</dbReference>
<dbReference type="SMR" id="Q5R4Q7"/>
<dbReference type="FunCoup" id="Q5R4Q7">
    <property type="interactions" value="1056"/>
</dbReference>
<dbReference type="STRING" id="9601.ENSPPYP00000013416"/>
<dbReference type="GeneID" id="100173934"/>
<dbReference type="KEGG" id="pon:100173934"/>
<dbReference type="CTD" id="8216"/>
<dbReference type="eggNOG" id="KOG0379">
    <property type="taxonomic scope" value="Eukaryota"/>
</dbReference>
<dbReference type="InParanoid" id="Q5R4Q7"/>
<dbReference type="OrthoDB" id="10250130at2759"/>
<dbReference type="UniPathway" id="UPA00143"/>
<dbReference type="Proteomes" id="UP000001595">
    <property type="component" value="Unplaced"/>
</dbReference>
<dbReference type="GO" id="GO:0031463">
    <property type="term" value="C:Cul3-RING ubiquitin ligase complex"/>
    <property type="evidence" value="ECO:0000250"/>
    <property type="project" value="UniProtKB"/>
</dbReference>
<dbReference type="GO" id="GO:0012505">
    <property type="term" value="C:endomembrane system"/>
    <property type="evidence" value="ECO:0000250"/>
    <property type="project" value="UniProtKB"/>
</dbReference>
<dbReference type="GO" id="GO:0005794">
    <property type="term" value="C:Golgi apparatus"/>
    <property type="evidence" value="ECO:0000250"/>
    <property type="project" value="UniProtKB"/>
</dbReference>
<dbReference type="GO" id="GO:0055038">
    <property type="term" value="C:recycling endosome membrane"/>
    <property type="evidence" value="ECO:0000250"/>
    <property type="project" value="UniProtKB"/>
</dbReference>
<dbReference type="GO" id="GO:0031267">
    <property type="term" value="F:small GTPase binding"/>
    <property type="evidence" value="ECO:0000250"/>
    <property type="project" value="UniProtKB"/>
</dbReference>
<dbReference type="GO" id="GO:0046580">
    <property type="term" value="P:negative regulation of Ras protein signal transduction"/>
    <property type="evidence" value="ECO:0000250"/>
    <property type="project" value="UniProtKB"/>
</dbReference>
<dbReference type="GO" id="GO:0016567">
    <property type="term" value="P:protein ubiquitination"/>
    <property type="evidence" value="ECO:0000250"/>
    <property type="project" value="UniProtKB"/>
</dbReference>
<dbReference type="CDD" id="cd18505">
    <property type="entry name" value="BACK1_LZTR1"/>
    <property type="match status" value="1"/>
</dbReference>
<dbReference type="CDD" id="cd18506">
    <property type="entry name" value="BACK2_LZTR1"/>
    <property type="match status" value="1"/>
</dbReference>
<dbReference type="CDD" id="cd18308">
    <property type="entry name" value="BTB1_POZ_LZTR1"/>
    <property type="match status" value="1"/>
</dbReference>
<dbReference type="CDD" id="cd18309">
    <property type="entry name" value="BTB2_POZ_LZTR1"/>
    <property type="match status" value="1"/>
</dbReference>
<dbReference type="FunFam" id="3.30.710.10:FF:000024">
    <property type="entry name" value="Leucine-zipper-like transcriptional regulator 1"/>
    <property type="match status" value="1"/>
</dbReference>
<dbReference type="FunFam" id="2.120.10.80:FF:000038">
    <property type="entry name" value="leucine-zipper-like transcriptional regulator 1 isoform X1"/>
    <property type="match status" value="1"/>
</dbReference>
<dbReference type="FunFam" id="2.120.10.80:FF:000045">
    <property type="entry name" value="leucine-zipper-like transcriptional regulator 1 isoform X1"/>
    <property type="match status" value="1"/>
</dbReference>
<dbReference type="FunFam" id="3.30.710.10:FF:000049">
    <property type="entry name" value="leucine-zipper-like transcriptional regulator 1 isoform X1"/>
    <property type="match status" value="1"/>
</dbReference>
<dbReference type="Gene3D" id="2.120.10.80">
    <property type="entry name" value="Kelch-type beta propeller"/>
    <property type="match status" value="3"/>
</dbReference>
<dbReference type="Gene3D" id="3.30.710.10">
    <property type="entry name" value="Potassium Channel Kv1.1, Chain A"/>
    <property type="match status" value="2"/>
</dbReference>
<dbReference type="InterPro" id="IPR000210">
    <property type="entry name" value="BTB/POZ_dom"/>
</dbReference>
<dbReference type="InterPro" id="IPR015915">
    <property type="entry name" value="Kelch-typ_b-propeller"/>
</dbReference>
<dbReference type="InterPro" id="IPR006652">
    <property type="entry name" value="Kelch_1"/>
</dbReference>
<dbReference type="InterPro" id="IPR051568">
    <property type="entry name" value="LZTR1/Attractin"/>
</dbReference>
<dbReference type="InterPro" id="IPR011333">
    <property type="entry name" value="SKP1/BTB/POZ_sf"/>
</dbReference>
<dbReference type="PANTHER" id="PTHR46376">
    <property type="entry name" value="LEUCINE-ZIPPER-LIKE TRANSCRIPTIONAL REGULATOR 1"/>
    <property type="match status" value="1"/>
</dbReference>
<dbReference type="PANTHER" id="PTHR46376:SF1">
    <property type="entry name" value="LEUCINE-ZIPPER-LIKE TRANSCRIPTIONAL REGULATOR 1"/>
    <property type="match status" value="1"/>
</dbReference>
<dbReference type="Pfam" id="PF00651">
    <property type="entry name" value="BTB"/>
    <property type="match status" value="2"/>
</dbReference>
<dbReference type="Pfam" id="PF01344">
    <property type="entry name" value="Kelch_1"/>
    <property type="match status" value="1"/>
</dbReference>
<dbReference type="Pfam" id="PF24681">
    <property type="entry name" value="Kelch_KLHDC2_KLHL20_DRC7"/>
    <property type="match status" value="1"/>
</dbReference>
<dbReference type="SMART" id="SM00225">
    <property type="entry name" value="BTB"/>
    <property type="match status" value="2"/>
</dbReference>
<dbReference type="SUPFAM" id="SSF117281">
    <property type="entry name" value="Kelch motif"/>
    <property type="match status" value="1"/>
</dbReference>
<dbReference type="SUPFAM" id="SSF54695">
    <property type="entry name" value="POZ domain"/>
    <property type="match status" value="2"/>
</dbReference>
<dbReference type="PROSITE" id="PS50097">
    <property type="entry name" value="BTB"/>
    <property type="match status" value="2"/>
</dbReference>
<reference key="1">
    <citation type="submission" date="2004-11" db="EMBL/GenBank/DDBJ databases">
        <authorList>
            <consortium name="The German cDNA consortium"/>
        </authorList>
    </citation>
    <scope>NUCLEOTIDE SEQUENCE [LARGE SCALE MRNA]</scope>
    <source>
        <tissue>Brain cortex</tissue>
    </source>
</reference>
<name>LZTR1_PONAB</name>
<proteinExistence type="evidence at transcript level"/>
<gene>
    <name type="primary">LZTR1</name>
</gene>